<name>TULP1_MOUSE</name>
<evidence type="ECO:0000250" key="1"/>
<evidence type="ECO:0000256" key="2">
    <source>
        <dbReference type="SAM" id="MobiDB-lite"/>
    </source>
</evidence>
<evidence type="ECO:0000269" key="3">
    <source>
    </source>
</evidence>
<evidence type="ECO:0000269" key="4">
    <source>
    </source>
</evidence>
<evidence type="ECO:0000269" key="5">
    <source>
    </source>
</evidence>
<evidence type="ECO:0000269" key="6">
    <source>
    </source>
</evidence>
<evidence type="ECO:0000269" key="7">
    <source>
    </source>
</evidence>
<evidence type="ECO:0000269" key="8">
    <source>
    </source>
</evidence>
<evidence type="ECO:0000305" key="9"/>
<proteinExistence type="evidence at protein level"/>
<organism>
    <name type="scientific">Mus musculus</name>
    <name type="common">Mouse</name>
    <dbReference type="NCBI Taxonomy" id="10090"/>
    <lineage>
        <taxon>Eukaryota</taxon>
        <taxon>Metazoa</taxon>
        <taxon>Chordata</taxon>
        <taxon>Craniata</taxon>
        <taxon>Vertebrata</taxon>
        <taxon>Euteleostomi</taxon>
        <taxon>Mammalia</taxon>
        <taxon>Eutheria</taxon>
        <taxon>Euarchontoglires</taxon>
        <taxon>Glires</taxon>
        <taxon>Rodentia</taxon>
        <taxon>Myomorpha</taxon>
        <taxon>Muroidea</taxon>
        <taxon>Muridae</taxon>
        <taxon>Murinae</taxon>
        <taxon>Mus</taxon>
        <taxon>Mus</taxon>
    </lineage>
</organism>
<sequence>MPLQEETLREVWASDSGHEEDCLSPEPPLRPKQRPAQGQKLRKKKPETPDSLESKPRKAGAGRRKHEEPPADSAEPRAAQTVYAKFLRDPEAKKRDPRENFLVARAPDLGGEENSEEDSDDDDNDDDEEEEEKKEGKKEKSSLPPKKAPKEREKKAKALGPRGDVGSPDAPRKPLRTKKKEVGEGTKLRKAKKKGPGETDKDPAGSPAALRKEFPAAMFLVGEGGAAEKGVKKKGPPKGSEEEKKEEEEEVEEEVASAVMKNSNQKGRAKGKGKKKVKEERASSPPVEVGEPREFVLQPAPQGRAVRCRLTRDKKGMDRGMYPSYFLHLDTEKKVFLLAGRKRKRSKTANYLISSDPTNLSRGGENFIGKLRSNLLGNRFTVFDNGQNPQRGGGGDVGSLRQELAAVVYETNVLGFRGPRRMTVIIPGMNSDNERVPIRPRNASDGLLVRWQNKTLESLIELHNKPPIWNEDSGSYTLNFQGRVTQASVKNFQIVHADDPDYIVLQFGRVAEDAFTLDYRYPLCALQAFAIALSSFDGKLACE</sequence>
<gene>
    <name type="primary">Tulp1</name>
</gene>
<dbReference type="EMBL" id="AF085681">
    <property type="protein sequence ID" value="AAD13757.1"/>
    <property type="molecule type" value="mRNA"/>
</dbReference>
<dbReference type="EMBL" id="AF105711">
    <property type="protein sequence ID" value="AAD38451.1"/>
    <property type="molecule type" value="mRNA"/>
</dbReference>
<dbReference type="CCDS" id="CCDS28578.1"/>
<dbReference type="RefSeq" id="NP_067453.1">
    <property type="nucleotide sequence ID" value="NM_021478.2"/>
</dbReference>
<dbReference type="SMR" id="Q9Z273"/>
<dbReference type="BioGRID" id="204383">
    <property type="interactions" value="4"/>
</dbReference>
<dbReference type="CORUM" id="Q9Z273"/>
<dbReference type="FunCoup" id="Q9Z273">
    <property type="interactions" value="8"/>
</dbReference>
<dbReference type="STRING" id="10090.ENSMUSP00000049070"/>
<dbReference type="GlyGen" id="Q9Z273">
    <property type="glycosylation" value="2 sites, 1 N-linked glycan (1 site), 1 O-linked glycan (1 site)"/>
</dbReference>
<dbReference type="PhosphoSitePlus" id="Q9Z273"/>
<dbReference type="jPOST" id="Q9Z273"/>
<dbReference type="PaxDb" id="10090-ENSMUSP00000049070"/>
<dbReference type="ProteomicsDB" id="298028"/>
<dbReference type="Antibodypedia" id="45745">
    <property type="antibodies" value="97 antibodies from 20 providers"/>
</dbReference>
<dbReference type="DNASU" id="22157"/>
<dbReference type="Ensembl" id="ENSMUST00000041819.14">
    <property type="protein sequence ID" value="ENSMUSP00000049070.7"/>
    <property type="gene ID" value="ENSMUSG00000037446.15"/>
</dbReference>
<dbReference type="GeneID" id="22157"/>
<dbReference type="KEGG" id="mmu:22157"/>
<dbReference type="UCSC" id="uc008bqv.1">
    <property type="organism name" value="mouse"/>
</dbReference>
<dbReference type="AGR" id="MGI:109571"/>
<dbReference type="CTD" id="7287"/>
<dbReference type="MGI" id="MGI:109571">
    <property type="gene designation" value="Tulp1"/>
</dbReference>
<dbReference type="VEuPathDB" id="HostDB:ENSMUSG00000037446"/>
<dbReference type="eggNOG" id="KOG2502">
    <property type="taxonomic scope" value="Eukaryota"/>
</dbReference>
<dbReference type="GeneTree" id="ENSGT00940000158771"/>
<dbReference type="HOGENOM" id="CLU_028236_5_1_1"/>
<dbReference type="InParanoid" id="Q9Z273"/>
<dbReference type="OMA" id="YAKFIRD"/>
<dbReference type="OrthoDB" id="8775810at2759"/>
<dbReference type="PhylomeDB" id="Q9Z273"/>
<dbReference type="TreeFam" id="TF314076"/>
<dbReference type="BioGRID-ORCS" id="22157">
    <property type="hits" value="4 hits in 76 CRISPR screens"/>
</dbReference>
<dbReference type="ChiTaRS" id="Tulp1">
    <property type="organism name" value="mouse"/>
</dbReference>
<dbReference type="PRO" id="PR:Q9Z273"/>
<dbReference type="Proteomes" id="UP000000589">
    <property type="component" value="Chromosome 17"/>
</dbReference>
<dbReference type="RNAct" id="Q9Z273">
    <property type="molecule type" value="protein"/>
</dbReference>
<dbReference type="Bgee" id="ENSMUSG00000037446">
    <property type="expression patterns" value="Expressed in retinal neural layer and 66 other cell types or tissues"/>
</dbReference>
<dbReference type="ExpressionAtlas" id="Q9Z273">
    <property type="expression patterns" value="baseline and differential"/>
</dbReference>
<dbReference type="GO" id="GO:0043679">
    <property type="term" value="C:axon terminus"/>
    <property type="evidence" value="ECO:0000314"/>
    <property type="project" value="MGI"/>
</dbReference>
<dbReference type="GO" id="GO:0042995">
    <property type="term" value="C:cell projection"/>
    <property type="evidence" value="ECO:0000250"/>
    <property type="project" value="UniProtKB"/>
</dbReference>
<dbReference type="GO" id="GO:0005829">
    <property type="term" value="C:cytosol"/>
    <property type="evidence" value="ECO:0000314"/>
    <property type="project" value="MGI"/>
</dbReference>
<dbReference type="GO" id="GO:0005576">
    <property type="term" value="C:extracellular region"/>
    <property type="evidence" value="ECO:0000314"/>
    <property type="project" value="MGI"/>
</dbReference>
<dbReference type="GO" id="GO:0001917">
    <property type="term" value="C:photoreceptor inner segment"/>
    <property type="evidence" value="ECO:0000314"/>
    <property type="project" value="UniProtKB"/>
</dbReference>
<dbReference type="GO" id="GO:0001750">
    <property type="term" value="C:photoreceptor outer segment"/>
    <property type="evidence" value="ECO:0000314"/>
    <property type="project" value="UniProtKB"/>
</dbReference>
<dbReference type="GO" id="GO:0005886">
    <property type="term" value="C:plasma membrane"/>
    <property type="evidence" value="ECO:0000250"/>
    <property type="project" value="UniProtKB"/>
</dbReference>
<dbReference type="GO" id="GO:0045202">
    <property type="term" value="C:synapse"/>
    <property type="evidence" value="ECO:0000314"/>
    <property type="project" value="UniProtKB"/>
</dbReference>
<dbReference type="GO" id="GO:0051015">
    <property type="term" value="F:actin filament binding"/>
    <property type="evidence" value="ECO:0000250"/>
    <property type="project" value="UniProtKB"/>
</dbReference>
<dbReference type="GO" id="GO:0005546">
    <property type="term" value="F:phosphatidylinositol-4,5-bisphosphate binding"/>
    <property type="evidence" value="ECO:0000250"/>
    <property type="project" value="UniProtKB"/>
</dbReference>
<dbReference type="GO" id="GO:0016358">
    <property type="term" value="P:dendrite development"/>
    <property type="evidence" value="ECO:0000315"/>
    <property type="project" value="UniProtKB"/>
</dbReference>
<dbReference type="GO" id="GO:0050908">
    <property type="term" value="P:detection of light stimulus involved in visual perception"/>
    <property type="evidence" value="ECO:0007669"/>
    <property type="project" value="Ensembl"/>
</dbReference>
<dbReference type="GO" id="GO:0042462">
    <property type="term" value="P:eye photoreceptor cell development"/>
    <property type="evidence" value="ECO:0000315"/>
    <property type="project" value="UniProtKB"/>
</dbReference>
<dbReference type="GO" id="GO:0006910">
    <property type="term" value="P:phagocytosis, recognition"/>
    <property type="evidence" value="ECO:0000314"/>
    <property type="project" value="MGI"/>
</dbReference>
<dbReference type="GO" id="GO:0045494">
    <property type="term" value="P:photoreceptor cell maintenance"/>
    <property type="evidence" value="ECO:0000315"/>
    <property type="project" value="UniProtKB"/>
</dbReference>
<dbReference type="GO" id="GO:0050766">
    <property type="term" value="P:positive regulation of phagocytosis"/>
    <property type="evidence" value="ECO:0000250"/>
    <property type="project" value="UniProtKB"/>
</dbReference>
<dbReference type="GO" id="GO:1903546">
    <property type="term" value="P:protein localization to photoreceptor outer segment"/>
    <property type="evidence" value="ECO:0000315"/>
    <property type="project" value="MGI"/>
</dbReference>
<dbReference type="GO" id="GO:0060041">
    <property type="term" value="P:retina development in camera-type eye"/>
    <property type="evidence" value="ECO:0000315"/>
    <property type="project" value="MGI"/>
</dbReference>
<dbReference type="GO" id="GO:0016192">
    <property type="term" value="P:vesicle-mediated transport"/>
    <property type="evidence" value="ECO:0000315"/>
    <property type="project" value="MGI"/>
</dbReference>
<dbReference type="FunFam" id="3.20.90.10:FF:000001">
    <property type="entry name" value="Tubby-like protein"/>
    <property type="match status" value="1"/>
</dbReference>
<dbReference type="Gene3D" id="3.20.90.10">
    <property type="entry name" value="Tubby Protein, Chain A"/>
    <property type="match status" value="1"/>
</dbReference>
<dbReference type="InterPro" id="IPR025659">
    <property type="entry name" value="Tubby-like_C"/>
</dbReference>
<dbReference type="InterPro" id="IPR000007">
    <property type="entry name" value="Tubby_C"/>
</dbReference>
<dbReference type="InterPro" id="IPR018066">
    <property type="entry name" value="Tubby_C_CS"/>
</dbReference>
<dbReference type="PANTHER" id="PTHR16517">
    <property type="entry name" value="TUBBY-RELATED"/>
    <property type="match status" value="1"/>
</dbReference>
<dbReference type="PANTHER" id="PTHR16517:SF12">
    <property type="entry name" value="TUBBY-RELATED PROTEIN 1"/>
    <property type="match status" value="1"/>
</dbReference>
<dbReference type="Pfam" id="PF01167">
    <property type="entry name" value="Tub"/>
    <property type="match status" value="1"/>
</dbReference>
<dbReference type="PRINTS" id="PR01573">
    <property type="entry name" value="SUPERTUBBY"/>
</dbReference>
<dbReference type="SUPFAM" id="SSF54518">
    <property type="entry name" value="Tubby C-terminal domain-like"/>
    <property type="match status" value="1"/>
</dbReference>
<dbReference type="PROSITE" id="PS01200">
    <property type="entry name" value="TUB_1"/>
    <property type="match status" value="1"/>
</dbReference>
<dbReference type="PROSITE" id="PS01201">
    <property type="entry name" value="TUB_2"/>
    <property type="match status" value="1"/>
</dbReference>
<comment type="function">
    <text evidence="1 3 4 5 7">Required for normal development of photoreceptor synapses. Required for normal photoreceptor function and for long-term survival of photoreceptor cells. Interacts with cytoskeleton proteins and may play a role in protein transport in photoreceptor cells. Binds lipids, especially phosphatidylinositol 3-phosphate, phosphatidylinositol 4-phosphate, phosphatidylinositol 5-phosphate, phosphatidylinositol 3,4-bisphosphate, phosphatidylinositol 4,5-bisphosphate, phosphatidylinositol 3,4,5-bisphosphate, phosphatidylserine and phosphatidic acid (in vitro) (By similarity). Contribute to stimulation of phagocytosis of apoptotic retinal pigment epithelium (RPE) cells and macrophages.</text>
</comment>
<comment type="subunit">
    <text evidence="1 4 6 7 8 9">Homodimer (Probable). May interact with ABCF1, PSIP1, ZEB1 and HMGB2 (Potential). Interacts with F-actin (By similarity). Interacts with DNM1. Interacts with TUB. Interacts with TYRO3.</text>
</comment>
<comment type="subcellular location">
    <subcellularLocation>
        <location>Cytoplasm</location>
    </subcellularLocation>
    <subcellularLocation>
        <location evidence="1">Cell membrane</location>
        <topology evidence="1">Peripheral membrane protein</topology>
        <orientation evidence="1">Cytoplasmic side</orientation>
    </subcellularLocation>
    <subcellularLocation>
        <location>Secreted</location>
    </subcellularLocation>
    <subcellularLocation>
        <location>Synapse</location>
    </subcellularLocation>
    <text>Detected at synapses between photoreceptor cells and second-order neurons. Does not have a cleavable signal peptide and is secreted by an alternative pathway.</text>
</comment>
<comment type="tissue specificity">
    <text evidence="5">Retina specific. Detected in the outer plexiform layer in photoreceptor cells (at protein level).</text>
</comment>
<comment type="disruption phenotype">
    <text evidence="5">Malformation of photoreceptor synapses, followed by photoreceptor degeneration.</text>
</comment>
<comment type="similarity">
    <text evidence="9">Belongs to the TUB family.</text>
</comment>
<accession>Q9Z273</accession>
<reference key="1">
    <citation type="submission" date="1998-08" db="EMBL/GenBank/DDBJ databases">
        <title>Molecular evolution of the tubby gene family.</title>
        <authorList>
            <person name="Naggert J.K."/>
            <person name="Nishina P.M."/>
            <person name="Fitch D."/>
            <person name="McGinnis N."/>
            <person name="Basson M."/>
            <person name="Yan G."/>
            <person name="Cardon L."/>
            <person name="Shiva N."/>
            <person name="Duyao M."/>
            <person name="Ikeda A."/>
            <person name="McGinnis A."/>
            <person name="North M.A."/>
        </authorList>
    </citation>
    <scope>NUCLEOTIDE SEQUENCE [MRNA]</scope>
    <source>
        <strain>BALB/cJ</strain>
    </source>
</reference>
<reference key="2">
    <citation type="submission" date="1998-11" db="EMBL/GenBank/DDBJ databases">
        <title>Apoptotic photoreceptor cell death in tubby mice and the localization of tubby gene family members in the retina.</title>
        <authorList>
            <person name="Ikeda S."/>
            <person name="Sorokina I."/>
            <person name="Naggert J.K."/>
            <person name="North M.A."/>
            <person name="Nishina P.M."/>
        </authorList>
    </citation>
    <scope>NUCLEOTIDE SEQUENCE [MRNA]</scope>
    <source>
        <strain>BALB/cJ</strain>
    </source>
</reference>
<reference key="3">
    <citation type="journal article" date="2001" name="Invest. Ophthalmol. Vis. Sci.">
        <title>A role for the Tubby-like protein 1 in rhodopsin transport.</title>
        <authorList>
            <person name="Hagstrom S.A."/>
            <person name="Adamian M."/>
            <person name="Scimeca M."/>
            <person name="Pawlyk B.S."/>
            <person name="Yue G."/>
            <person name="Li T."/>
        </authorList>
    </citation>
    <scope>SUBCELLULAR LOCATION</scope>
    <scope>FUNCTION</scope>
</reference>
<reference key="4">
    <citation type="journal article" date="2007" name="Invest. Ophthalmol. Vis. Sci.">
        <title>Interaction between the photoreceptor-specific tubby-like protein 1 and the neuronal-specific GTPase dynamin-1.</title>
        <authorList>
            <person name="Xi Q."/>
            <person name="Pauer G.J.T."/>
            <person name="Ball S.L."/>
            <person name="Rayborn M."/>
            <person name="Hollyfield J.G."/>
            <person name="Peachey N.S."/>
            <person name="Crabb J.W."/>
            <person name="Hagstrom S.A."/>
        </authorList>
    </citation>
    <scope>INTERACTION WITH DNM1</scope>
    <scope>IDENTIFICATION BY MASS SPECTROMETRY</scope>
    <scope>SUBCELLULAR LOCATION</scope>
    <scope>SUBUNIT</scope>
    <scope>FUNCTION</scope>
</reference>
<reference key="5">
    <citation type="journal article" date="2009" name="FEBS Lett.">
        <title>Unconventional secretion of tubby and tubby-like protein 1.</title>
        <authorList>
            <person name="Caberoy N.B."/>
            <person name="Li W."/>
        </authorList>
    </citation>
    <scope>SUBCELLULAR LOCATION</scope>
</reference>
<reference key="6">
    <citation type="journal article" date="2009" name="Invest. Ophthalmol. Vis. Sci.">
        <title>Early synaptic defects in tulp1-/- mice.</title>
        <authorList>
            <person name="Grossman G.H."/>
            <person name="Pauer G.J.T."/>
            <person name="Narendra U."/>
            <person name="Peachey N.S."/>
            <person name="Hagstrom S.A."/>
        </authorList>
    </citation>
    <scope>DISRUPTION PHENOTYPE</scope>
    <scope>FUNCTION</scope>
    <scope>TISSUE SPECIFICITY</scope>
</reference>
<reference key="7">
    <citation type="journal article" date="2010" name="EMBO J.">
        <title>Tubby and tubby-like protein 1 are new MerTK ligands for phagocytosis.</title>
        <authorList>
            <person name="Caberoy N.B."/>
            <person name="Zhou Y."/>
            <person name="Li W."/>
        </authorList>
    </citation>
    <scope>INTERACTION WITH TYRO3</scope>
</reference>
<reference key="8">
    <citation type="journal article" date="2010" name="Exp. Cell Res.">
        <title>Identification of tubby and tubby-like protein 1 as eat-me signals by phage display.</title>
        <authorList>
            <person name="Caberoy N.B."/>
            <person name="Maiguel D."/>
            <person name="Kim Y."/>
            <person name="Li W."/>
        </authorList>
    </citation>
    <scope>FUNCTION</scope>
    <scope>INTERACTION WITH TUB</scope>
</reference>
<reference key="9">
    <citation type="journal article" date="2010" name="J. Mol. Recognit.">
        <title>Efficient identification of tubby-binding proteins by an improved system of T7 phage display.</title>
        <authorList>
            <person name="Caberoy N.B."/>
            <person name="Zhou Y."/>
            <person name="Jiang X."/>
            <person name="Alvarado G."/>
            <person name="Li W."/>
        </authorList>
    </citation>
    <scope>INTERACTION WITH HMGB2; ABCF1; PSIP1 AND ZEB1</scope>
</reference>
<feature type="chain" id="PRO_0000186467" description="Tubby-related protein 1">
    <location>
        <begin position="1"/>
        <end position="543"/>
    </location>
</feature>
<feature type="region of interest" description="Disordered" evidence="2">
    <location>
        <begin position="1"/>
        <end position="290"/>
    </location>
</feature>
<feature type="compositionally biased region" description="Basic and acidic residues" evidence="2">
    <location>
        <begin position="46"/>
        <end position="56"/>
    </location>
</feature>
<feature type="compositionally biased region" description="Basic and acidic residues" evidence="2">
    <location>
        <begin position="86"/>
        <end position="99"/>
    </location>
</feature>
<feature type="compositionally biased region" description="Acidic residues" evidence="2">
    <location>
        <begin position="110"/>
        <end position="132"/>
    </location>
</feature>
<feature type="compositionally biased region" description="Acidic residues" evidence="2">
    <location>
        <begin position="244"/>
        <end position="255"/>
    </location>
</feature>
<feature type="compositionally biased region" description="Basic residues" evidence="2">
    <location>
        <begin position="267"/>
        <end position="276"/>
    </location>
</feature>
<keyword id="KW-1003">Cell membrane</keyword>
<keyword id="KW-0963">Cytoplasm</keyword>
<keyword id="KW-0472">Membrane</keyword>
<keyword id="KW-0581">Phagocytosis</keyword>
<keyword id="KW-1185">Reference proteome</keyword>
<keyword id="KW-0964">Secreted</keyword>
<keyword id="KW-0716">Sensory transduction</keyword>
<keyword id="KW-0770">Synapse</keyword>
<keyword id="KW-0844">Vision</keyword>
<protein>
    <recommendedName>
        <fullName>Tubby-related protein 1</fullName>
    </recommendedName>
    <alternativeName>
        <fullName>Tubby-like protein 1</fullName>
    </alternativeName>
</protein>